<evidence type="ECO:0000255" key="1">
    <source>
        <dbReference type="HAMAP-Rule" id="MF_00469"/>
    </source>
</evidence>
<evidence type="ECO:0000256" key="2">
    <source>
        <dbReference type="SAM" id="MobiDB-lite"/>
    </source>
</evidence>
<accession>B1JHG7</accession>
<dbReference type="EC" id="1.14.-.-" evidence="1"/>
<dbReference type="EMBL" id="CP000950">
    <property type="protein sequence ID" value="ACA67961.1"/>
    <property type="molecule type" value="Genomic_DNA"/>
</dbReference>
<dbReference type="RefSeq" id="WP_002211854.1">
    <property type="nucleotide sequence ID" value="NZ_CP009792.1"/>
</dbReference>
<dbReference type="SMR" id="B1JHG7"/>
<dbReference type="KEGG" id="ypy:YPK_1668"/>
<dbReference type="PATRIC" id="fig|502800.11.peg.2328"/>
<dbReference type="GO" id="GO:0016705">
    <property type="term" value="F:oxidoreductase activity, acting on paired donors, with incorporation or reduction of molecular oxygen"/>
    <property type="evidence" value="ECO:0007669"/>
    <property type="project" value="UniProtKB-UniRule"/>
</dbReference>
<dbReference type="GO" id="GO:0006400">
    <property type="term" value="P:tRNA modification"/>
    <property type="evidence" value="ECO:0007669"/>
    <property type="project" value="UniProtKB-UniRule"/>
</dbReference>
<dbReference type="CDD" id="cd01518">
    <property type="entry name" value="RHOD_YceA"/>
    <property type="match status" value="1"/>
</dbReference>
<dbReference type="Gene3D" id="3.30.70.100">
    <property type="match status" value="1"/>
</dbReference>
<dbReference type="Gene3D" id="3.40.250.10">
    <property type="entry name" value="Rhodanese-like domain"/>
    <property type="match status" value="1"/>
</dbReference>
<dbReference type="HAMAP" id="MF_00469">
    <property type="entry name" value="TrhO"/>
    <property type="match status" value="1"/>
</dbReference>
<dbReference type="InterPro" id="IPR001763">
    <property type="entry name" value="Rhodanese-like_dom"/>
</dbReference>
<dbReference type="InterPro" id="IPR036873">
    <property type="entry name" value="Rhodanese-like_dom_sf"/>
</dbReference>
<dbReference type="InterPro" id="IPR022111">
    <property type="entry name" value="Rhodanese_C"/>
</dbReference>
<dbReference type="InterPro" id="IPR020936">
    <property type="entry name" value="TrhO"/>
</dbReference>
<dbReference type="InterPro" id="IPR040503">
    <property type="entry name" value="TRHO_N"/>
</dbReference>
<dbReference type="NCBIfam" id="NF001133">
    <property type="entry name" value="PRK00142.1-1"/>
    <property type="match status" value="1"/>
</dbReference>
<dbReference type="PANTHER" id="PTHR43846:SF1">
    <property type="entry name" value="TRNA URIDINE(34) HYDROXYLASE"/>
    <property type="match status" value="1"/>
</dbReference>
<dbReference type="PANTHER" id="PTHR43846">
    <property type="entry name" value="UPF0176 PROTEIN YCEA"/>
    <property type="match status" value="1"/>
</dbReference>
<dbReference type="Pfam" id="PF00581">
    <property type="entry name" value="Rhodanese"/>
    <property type="match status" value="1"/>
</dbReference>
<dbReference type="Pfam" id="PF12368">
    <property type="entry name" value="Rhodanese_C"/>
    <property type="match status" value="1"/>
</dbReference>
<dbReference type="Pfam" id="PF17773">
    <property type="entry name" value="UPF0176_N"/>
    <property type="match status" value="1"/>
</dbReference>
<dbReference type="SMART" id="SM00450">
    <property type="entry name" value="RHOD"/>
    <property type="match status" value="1"/>
</dbReference>
<dbReference type="SUPFAM" id="SSF52821">
    <property type="entry name" value="Rhodanese/Cell cycle control phosphatase"/>
    <property type="match status" value="1"/>
</dbReference>
<dbReference type="PROSITE" id="PS50206">
    <property type="entry name" value="RHODANESE_3"/>
    <property type="match status" value="1"/>
</dbReference>
<comment type="function">
    <text evidence="1">Catalyzes oxygen-dependent 5-hydroxyuridine (ho5U) modification at position 34 in tRNAs.</text>
</comment>
<comment type="catalytic activity">
    <reaction evidence="1">
        <text>uridine(34) in tRNA + AH2 + O2 = 5-hydroxyuridine(34) in tRNA + A + H2O</text>
        <dbReference type="Rhea" id="RHEA:64224"/>
        <dbReference type="Rhea" id="RHEA-COMP:11727"/>
        <dbReference type="Rhea" id="RHEA-COMP:13381"/>
        <dbReference type="ChEBI" id="CHEBI:13193"/>
        <dbReference type="ChEBI" id="CHEBI:15377"/>
        <dbReference type="ChEBI" id="CHEBI:15379"/>
        <dbReference type="ChEBI" id="CHEBI:17499"/>
        <dbReference type="ChEBI" id="CHEBI:65315"/>
        <dbReference type="ChEBI" id="CHEBI:136877"/>
    </reaction>
</comment>
<comment type="similarity">
    <text evidence="1">Belongs to the TrhO family.</text>
</comment>
<name>TRHO_YERPY</name>
<proteinExistence type="inferred from homology"/>
<feature type="chain" id="PRO_1000200391" description="tRNA uridine(34) hydroxylase">
    <location>
        <begin position="1"/>
        <end position="355"/>
    </location>
</feature>
<feature type="domain" description="Rhodanese" evidence="1">
    <location>
        <begin position="146"/>
        <end position="240"/>
    </location>
</feature>
<feature type="region of interest" description="Disordered" evidence="2">
    <location>
        <begin position="333"/>
        <end position="355"/>
    </location>
</feature>
<feature type="active site" description="Cysteine persulfide intermediate" evidence="1">
    <location>
        <position position="200"/>
    </location>
</feature>
<reference key="1">
    <citation type="submission" date="2008-02" db="EMBL/GenBank/DDBJ databases">
        <title>Complete sequence of Yersinia pseudotuberculosis YPIII.</title>
        <authorList>
            <consortium name="US DOE Joint Genome Institute"/>
            <person name="Copeland A."/>
            <person name="Lucas S."/>
            <person name="Lapidus A."/>
            <person name="Glavina del Rio T."/>
            <person name="Dalin E."/>
            <person name="Tice H."/>
            <person name="Bruce D."/>
            <person name="Goodwin L."/>
            <person name="Pitluck S."/>
            <person name="Munk A.C."/>
            <person name="Brettin T."/>
            <person name="Detter J.C."/>
            <person name="Han C."/>
            <person name="Tapia R."/>
            <person name="Schmutz J."/>
            <person name="Larimer F."/>
            <person name="Land M."/>
            <person name="Hauser L."/>
            <person name="Challacombe J.F."/>
            <person name="Green L."/>
            <person name="Lindler L.E."/>
            <person name="Nikolich M.P."/>
            <person name="Richardson P."/>
        </authorList>
    </citation>
    <scope>NUCLEOTIDE SEQUENCE [LARGE SCALE GENOMIC DNA]</scope>
    <source>
        <strain>YPIII</strain>
    </source>
</reference>
<keyword id="KW-0560">Oxidoreductase</keyword>
<keyword id="KW-0819">tRNA processing</keyword>
<protein>
    <recommendedName>
        <fullName evidence="1">tRNA uridine(34) hydroxylase</fullName>
        <ecNumber evidence="1">1.14.-.-</ecNumber>
    </recommendedName>
    <alternativeName>
        <fullName evidence="1">tRNA hydroxylation protein O</fullName>
    </alternativeName>
</protein>
<sequence length="355" mass="40550">MPVLHNRISNEELKARMLAETEPRTTVSFYKYFTLEDAKTFRDNLYSQFVKLGVFGRVYVAKEGINAQISVPANRYDEFKIALFASHPALDQVRLNVAHEDDGKSFWVLRLKVRERIVADGIDDDSFDPANIGHYLKADQVNQMIDDPDTLFVDMRNHYEYEVGHFENAIEVPSDTFREQLPMAVDMLQHDKEKNIVMYCTGGIRCEKASAYMLHNGFKNVYHVEGGIIEYARKAKEQGLPLKFIGKNFVFDERMGERISDDVIAHCHQCGTPCDAHTNCKNDGCHLLFIQCPVCAAKFEGCCSQICQEELKLPQEEQRSRRAGRENGIKIFNKSKGLLQATMHIPSPEKSADEK</sequence>
<gene>
    <name evidence="1" type="primary">trhO</name>
    <name type="ordered locus">YPK_1668</name>
</gene>
<organism>
    <name type="scientific">Yersinia pseudotuberculosis serotype O:3 (strain YPIII)</name>
    <dbReference type="NCBI Taxonomy" id="502800"/>
    <lineage>
        <taxon>Bacteria</taxon>
        <taxon>Pseudomonadati</taxon>
        <taxon>Pseudomonadota</taxon>
        <taxon>Gammaproteobacteria</taxon>
        <taxon>Enterobacterales</taxon>
        <taxon>Yersiniaceae</taxon>
        <taxon>Yersinia</taxon>
    </lineage>
</organism>